<evidence type="ECO:0000255" key="1">
    <source>
        <dbReference type="HAMAP-Rule" id="MF_00073"/>
    </source>
</evidence>
<evidence type="ECO:0000256" key="2">
    <source>
        <dbReference type="SAM" id="MobiDB-lite"/>
    </source>
</evidence>
<reference key="1">
    <citation type="journal article" date="2010" name="PLoS ONE">
        <title>The complete multipartite genome sequence of Cupriavidus necator JMP134, a versatile pollutant degrader.</title>
        <authorList>
            <person name="Lykidis A."/>
            <person name="Perez-Pantoja D."/>
            <person name="Ledger T."/>
            <person name="Mavromatis K."/>
            <person name="Anderson I.J."/>
            <person name="Ivanova N.N."/>
            <person name="Hooper S.D."/>
            <person name="Lapidus A."/>
            <person name="Lucas S."/>
            <person name="Gonzalez B."/>
            <person name="Kyrpides N.C."/>
        </authorList>
    </citation>
    <scope>NUCLEOTIDE SEQUENCE [LARGE SCALE GENOMIC DNA]</scope>
    <source>
        <strain>JMP134 / LMG 1197</strain>
    </source>
</reference>
<proteinExistence type="inferred from homology"/>
<dbReference type="EMBL" id="CP000090">
    <property type="protein sequence ID" value="AAZ60148.1"/>
    <property type="molecule type" value="Genomic_DNA"/>
</dbReference>
<dbReference type="SMR" id="Q474N5"/>
<dbReference type="STRING" id="264198.Reut_A0768"/>
<dbReference type="KEGG" id="reu:Reut_A0768"/>
<dbReference type="eggNOG" id="COG0781">
    <property type="taxonomic scope" value="Bacteria"/>
</dbReference>
<dbReference type="HOGENOM" id="CLU_087843_4_1_4"/>
<dbReference type="OrthoDB" id="9789556at2"/>
<dbReference type="GO" id="GO:0005829">
    <property type="term" value="C:cytosol"/>
    <property type="evidence" value="ECO:0007669"/>
    <property type="project" value="TreeGrafter"/>
</dbReference>
<dbReference type="GO" id="GO:0003723">
    <property type="term" value="F:RNA binding"/>
    <property type="evidence" value="ECO:0007669"/>
    <property type="project" value="UniProtKB-UniRule"/>
</dbReference>
<dbReference type="GO" id="GO:0006353">
    <property type="term" value="P:DNA-templated transcription termination"/>
    <property type="evidence" value="ECO:0007669"/>
    <property type="project" value="UniProtKB-UniRule"/>
</dbReference>
<dbReference type="GO" id="GO:0031564">
    <property type="term" value="P:transcription antitermination"/>
    <property type="evidence" value="ECO:0007669"/>
    <property type="project" value="UniProtKB-KW"/>
</dbReference>
<dbReference type="Gene3D" id="1.10.940.10">
    <property type="entry name" value="NusB-like"/>
    <property type="match status" value="1"/>
</dbReference>
<dbReference type="HAMAP" id="MF_00073">
    <property type="entry name" value="NusB"/>
    <property type="match status" value="1"/>
</dbReference>
<dbReference type="InterPro" id="IPR035926">
    <property type="entry name" value="NusB-like_sf"/>
</dbReference>
<dbReference type="InterPro" id="IPR011605">
    <property type="entry name" value="NusB_fam"/>
</dbReference>
<dbReference type="InterPro" id="IPR006027">
    <property type="entry name" value="NusB_RsmB_TIM44"/>
</dbReference>
<dbReference type="NCBIfam" id="TIGR01951">
    <property type="entry name" value="nusB"/>
    <property type="match status" value="1"/>
</dbReference>
<dbReference type="PANTHER" id="PTHR11078:SF3">
    <property type="entry name" value="ANTITERMINATION NUSB DOMAIN-CONTAINING PROTEIN"/>
    <property type="match status" value="1"/>
</dbReference>
<dbReference type="PANTHER" id="PTHR11078">
    <property type="entry name" value="N UTILIZATION SUBSTANCE PROTEIN B-RELATED"/>
    <property type="match status" value="1"/>
</dbReference>
<dbReference type="Pfam" id="PF01029">
    <property type="entry name" value="NusB"/>
    <property type="match status" value="1"/>
</dbReference>
<dbReference type="SUPFAM" id="SSF48013">
    <property type="entry name" value="NusB-like"/>
    <property type="match status" value="1"/>
</dbReference>
<organism>
    <name type="scientific">Cupriavidus pinatubonensis (strain JMP 134 / LMG 1197)</name>
    <name type="common">Cupriavidus necator (strain JMP 134)</name>
    <dbReference type="NCBI Taxonomy" id="264198"/>
    <lineage>
        <taxon>Bacteria</taxon>
        <taxon>Pseudomonadati</taxon>
        <taxon>Pseudomonadota</taxon>
        <taxon>Betaproteobacteria</taxon>
        <taxon>Burkholderiales</taxon>
        <taxon>Burkholderiaceae</taxon>
        <taxon>Cupriavidus</taxon>
    </lineage>
</organism>
<comment type="function">
    <text evidence="1">Involved in transcription antitermination. Required for transcription of ribosomal RNA (rRNA) genes. Binds specifically to the boxA antiterminator sequence of the ribosomal RNA (rrn) operons.</text>
</comment>
<comment type="similarity">
    <text evidence="1">Belongs to the NusB family.</text>
</comment>
<keyword id="KW-0694">RNA-binding</keyword>
<keyword id="KW-0804">Transcription</keyword>
<keyword id="KW-0889">Transcription antitermination</keyword>
<keyword id="KW-0805">Transcription regulation</keyword>
<gene>
    <name evidence="1" type="primary">nusB</name>
    <name type="ordered locus">Reut_A0768</name>
</gene>
<name>NUSB_CUPPJ</name>
<sequence>MSDTPETGKPAAGTKPAARTEAKAPPKSARRRSRELALQGLYQWLLNRNDIGAIQAHLHDAQGFNKADSEHFDALLNGAVREEARLTAAFEPFLDRKVEELSPVERAALLVGSYELVHCVDIPYKVVINEAVELTKTFGGVEGYKYVNGVLDKLAAQVRSAEVAARR</sequence>
<accession>Q474N5</accession>
<feature type="chain" id="PRO_0000265569" description="Transcription antitermination protein NusB">
    <location>
        <begin position="1"/>
        <end position="167"/>
    </location>
</feature>
<feature type="region of interest" description="Disordered" evidence="2">
    <location>
        <begin position="1"/>
        <end position="32"/>
    </location>
</feature>
<protein>
    <recommendedName>
        <fullName evidence="1">Transcription antitermination protein NusB</fullName>
    </recommendedName>
    <alternativeName>
        <fullName evidence="1">Antitermination factor NusB</fullName>
    </alternativeName>
</protein>